<gene>
    <name type="ordered locus">TP_0910</name>
</gene>
<keyword id="KW-1185">Reference proteome</keyword>
<protein>
    <recommendedName>
        <fullName>Uncharacterized protein TP_0910</fullName>
    </recommendedName>
</protein>
<proteinExistence type="predicted"/>
<name>Y910_TREPA</name>
<sequence length="306" mass="33814">MNGAVRVVLTEVPRTVSLTEGALVCVRILSSTHAGRALVAINGERVRARVPQPMHKGAVLFLRASIRAGTVFLHPQCTSTPPSAEDMSAHFLQRWGVSFSPEAAALIHAHTSLCVPLQPQLIERFALLLKKFPEQKRAHAAFLASILGDRNIPVDAAMLRRMLSTFLGESGAYTDSDTERDLFALVNHTYHSALHWLLVPFERRGAHTVWRGTLSLLLHLHKKTCTQLRVRACNTAGEWVFCVQNNVLTVQRHAARELSRTAQKKTVARLCALLRERGIDFLSVRYGAHADSANDAVPFKGIDVSV</sequence>
<feature type="chain" id="PRO_0000202349" description="Uncharacterized protein TP_0910">
    <location>
        <begin position="1"/>
        <end position="306"/>
    </location>
</feature>
<accession>O83880</accession>
<reference key="1">
    <citation type="journal article" date="1998" name="Science">
        <title>Complete genome sequence of Treponema pallidum, the syphilis spirochete.</title>
        <authorList>
            <person name="Fraser C.M."/>
            <person name="Norris S.J."/>
            <person name="Weinstock G.M."/>
            <person name="White O."/>
            <person name="Sutton G.G."/>
            <person name="Dodson R.J."/>
            <person name="Gwinn M.L."/>
            <person name="Hickey E.K."/>
            <person name="Clayton R.A."/>
            <person name="Ketchum K.A."/>
            <person name="Sodergren E."/>
            <person name="Hardham J.M."/>
            <person name="McLeod M.P."/>
            <person name="Salzberg S.L."/>
            <person name="Peterson J.D."/>
            <person name="Khalak H.G."/>
            <person name="Richardson D.L."/>
            <person name="Howell J.K."/>
            <person name="Chidambaram M."/>
            <person name="Utterback T.R."/>
            <person name="McDonald L.A."/>
            <person name="Artiach P."/>
            <person name="Bowman C."/>
            <person name="Cotton M.D."/>
            <person name="Fujii C."/>
            <person name="Garland S.A."/>
            <person name="Hatch B."/>
            <person name="Horst K."/>
            <person name="Roberts K.M."/>
            <person name="Sandusky M."/>
            <person name="Weidman J.F."/>
            <person name="Smith H.O."/>
            <person name="Venter J.C."/>
        </authorList>
    </citation>
    <scope>NUCLEOTIDE SEQUENCE [LARGE SCALE GENOMIC DNA]</scope>
    <source>
        <strain>Nichols</strain>
    </source>
</reference>
<organism>
    <name type="scientific">Treponema pallidum (strain Nichols)</name>
    <dbReference type="NCBI Taxonomy" id="243276"/>
    <lineage>
        <taxon>Bacteria</taxon>
        <taxon>Pseudomonadati</taxon>
        <taxon>Spirochaetota</taxon>
        <taxon>Spirochaetia</taxon>
        <taxon>Spirochaetales</taxon>
        <taxon>Treponemataceae</taxon>
        <taxon>Treponema</taxon>
    </lineage>
</organism>
<dbReference type="EMBL" id="AE000520">
    <property type="protein sequence ID" value="AAC65870.1"/>
    <property type="molecule type" value="Genomic_DNA"/>
</dbReference>
<dbReference type="PIR" id="C71268">
    <property type="entry name" value="C71268"/>
</dbReference>
<dbReference type="RefSeq" id="WP_010882353.1">
    <property type="nucleotide sequence ID" value="NC_021490.2"/>
</dbReference>
<dbReference type="SMR" id="O83880"/>
<dbReference type="STRING" id="243276.TP_0910"/>
<dbReference type="EnsemblBacteria" id="AAC65870">
    <property type="protein sequence ID" value="AAC65870"/>
    <property type="gene ID" value="TP_0910"/>
</dbReference>
<dbReference type="KEGG" id="tpa:TP_0910"/>
<dbReference type="KEGG" id="tpw:TPANIC_0910"/>
<dbReference type="eggNOG" id="ENOG5031CIN">
    <property type="taxonomic scope" value="Bacteria"/>
</dbReference>
<dbReference type="HOGENOM" id="CLU_943144_0_0_12"/>
<dbReference type="Proteomes" id="UP000000811">
    <property type="component" value="Chromosome"/>
</dbReference>